<feature type="chain" id="PRO_0000152507" description="tRNA pseudouridine synthase D">
    <location>
        <begin position="1"/>
        <end position="338"/>
    </location>
</feature>
<feature type="domain" description="TRUD" evidence="1">
    <location>
        <begin position="154"/>
        <end position="303"/>
    </location>
</feature>
<feature type="active site" description="Nucleophile" evidence="1">
    <location>
        <position position="79"/>
    </location>
</feature>
<gene>
    <name evidence="1" type="primary">truD</name>
    <name type="ordered locus">lpl1400</name>
</gene>
<protein>
    <recommendedName>
        <fullName evidence="1">tRNA pseudouridine synthase D</fullName>
        <ecNumber evidence="1">5.4.99.27</ecNumber>
    </recommendedName>
    <alternativeName>
        <fullName evidence="1">tRNA pseudouridine(13) synthase</fullName>
    </alternativeName>
    <alternativeName>
        <fullName evidence="1">tRNA pseudouridylate synthase D</fullName>
    </alternativeName>
    <alternativeName>
        <fullName evidence="1">tRNA-uridine isomerase D</fullName>
    </alternativeName>
</protein>
<keyword id="KW-0413">Isomerase</keyword>
<keyword id="KW-0819">tRNA processing</keyword>
<proteinExistence type="inferred from homology"/>
<dbReference type="EC" id="5.4.99.27" evidence="1"/>
<dbReference type="EMBL" id="CR628337">
    <property type="protein sequence ID" value="CAH15640.1"/>
    <property type="molecule type" value="Genomic_DNA"/>
</dbReference>
<dbReference type="RefSeq" id="WP_011215459.1">
    <property type="nucleotide sequence ID" value="NC_006369.1"/>
</dbReference>
<dbReference type="SMR" id="Q5WWQ2"/>
<dbReference type="KEGG" id="lpf:lpl1400"/>
<dbReference type="LegioList" id="lpl1400"/>
<dbReference type="HOGENOM" id="CLU_005281_4_0_6"/>
<dbReference type="Proteomes" id="UP000002517">
    <property type="component" value="Chromosome"/>
</dbReference>
<dbReference type="GO" id="GO:0005829">
    <property type="term" value="C:cytosol"/>
    <property type="evidence" value="ECO:0007669"/>
    <property type="project" value="TreeGrafter"/>
</dbReference>
<dbReference type="GO" id="GO:0003723">
    <property type="term" value="F:RNA binding"/>
    <property type="evidence" value="ECO:0007669"/>
    <property type="project" value="InterPro"/>
</dbReference>
<dbReference type="GO" id="GO:0160150">
    <property type="term" value="F:tRNA pseudouridine(13) synthase activity"/>
    <property type="evidence" value="ECO:0007669"/>
    <property type="project" value="UniProtKB-EC"/>
</dbReference>
<dbReference type="GO" id="GO:0031119">
    <property type="term" value="P:tRNA pseudouridine synthesis"/>
    <property type="evidence" value="ECO:0007669"/>
    <property type="project" value="UniProtKB-UniRule"/>
</dbReference>
<dbReference type="CDD" id="cd02575">
    <property type="entry name" value="PseudoU_synth_EcTruD"/>
    <property type="match status" value="1"/>
</dbReference>
<dbReference type="Gene3D" id="3.30.2350.20">
    <property type="entry name" value="TruD, catalytic domain"/>
    <property type="match status" value="1"/>
</dbReference>
<dbReference type="Gene3D" id="3.30.2340.10">
    <property type="entry name" value="TruD, insertion domain"/>
    <property type="match status" value="1"/>
</dbReference>
<dbReference type="HAMAP" id="MF_01082">
    <property type="entry name" value="TruD"/>
    <property type="match status" value="1"/>
</dbReference>
<dbReference type="InterPro" id="IPR020103">
    <property type="entry name" value="PsdUridine_synth_cat_dom_sf"/>
</dbReference>
<dbReference type="InterPro" id="IPR001656">
    <property type="entry name" value="PsdUridine_synth_TruD"/>
</dbReference>
<dbReference type="InterPro" id="IPR020119">
    <property type="entry name" value="PsdUridine_synth_TruD_CS"/>
</dbReference>
<dbReference type="InterPro" id="IPR011760">
    <property type="entry name" value="PsdUridine_synth_TruD_insert"/>
</dbReference>
<dbReference type="InterPro" id="IPR042214">
    <property type="entry name" value="TruD_catalytic"/>
</dbReference>
<dbReference type="InterPro" id="IPR043165">
    <property type="entry name" value="TruD_insert_sf"/>
</dbReference>
<dbReference type="InterPro" id="IPR050170">
    <property type="entry name" value="TruD_pseudoU_synthase"/>
</dbReference>
<dbReference type="PANTHER" id="PTHR47811">
    <property type="entry name" value="TRNA PSEUDOURIDINE SYNTHASE D"/>
    <property type="match status" value="1"/>
</dbReference>
<dbReference type="PANTHER" id="PTHR47811:SF1">
    <property type="entry name" value="TRNA PSEUDOURIDINE SYNTHASE D"/>
    <property type="match status" value="1"/>
</dbReference>
<dbReference type="Pfam" id="PF01142">
    <property type="entry name" value="TruD"/>
    <property type="match status" value="2"/>
</dbReference>
<dbReference type="SUPFAM" id="SSF55120">
    <property type="entry name" value="Pseudouridine synthase"/>
    <property type="match status" value="1"/>
</dbReference>
<dbReference type="PROSITE" id="PS50984">
    <property type="entry name" value="TRUD"/>
    <property type="match status" value="1"/>
</dbReference>
<dbReference type="PROSITE" id="PS01268">
    <property type="entry name" value="UPF0024"/>
    <property type="match status" value="1"/>
</dbReference>
<reference key="1">
    <citation type="journal article" date="2004" name="Nat. Genet.">
        <title>Evidence in the Legionella pneumophila genome for exploitation of host cell functions and high genome plasticity.</title>
        <authorList>
            <person name="Cazalet C."/>
            <person name="Rusniok C."/>
            <person name="Brueggemann H."/>
            <person name="Zidane N."/>
            <person name="Magnier A."/>
            <person name="Ma L."/>
            <person name="Tichit M."/>
            <person name="Jarraud S."/>
            <person name="Bouchier C."/>
            <person name="Vandenesch F."/>
            <person name="Kunst F."/>
            <person name="Etienne J."/>
            <person name="Glaser P."/>
            <person name="Buchrieser C."/>
        </authorList>
    </citation>
    <scope>NUCLEOTIDE SEQUENCE [LARGE SCALE GENOMIC DNA]</scope>
    <source>
        <strain>Lens</strain>
    </source>
</reference>
<name>TRUD_LEGPL</name>
<evidence type="ECO:0000255" key="1">
    <source>
        <dbReference type="HAMAP-Rule" id="MF_01082"/>
    </source>
</evidence>
<comment type="function">
    <text evidence="1">Responsible for synthesis of pseudouridine from uracil-13 in transfer RNAs.</text>
</comment>
<comment type="catalytic activity">
    <reaction evidence="1">
        <text>uridine(13) in tRNA = pseudouridine(13) in tRNA</text>
        <dbReference type="Rhea" id="RHEA:42540"/>
        <dbReference type="Rhea" id="RHEA-COMP:10105"/>
        <dbReference type="Rhea" id="RHEA-COMP:10106"/>
        <dbReference type="ChEBI" id="CHEBI:65314"/>
        <dbReference type="ChEBI" id="CHEBI:65315"/>
        <dbReference type="EC" id="5.4.99.27"/>
    </reaction>
</comment>
<comment type="similarity">
    <text evidence="1">Belongs to the pseudouridine synthase TruD family.</text>
</comment>
<organism>
    <name type="scientific">Legionella pneumophila (strain Lens)</name>
    <dbReference type="NCBI Taxonomy" id="297245"/>
    <lineage>
        <taxon>Bacteria</taxon>
        <taxon>Pseudomonadati</taxon>
        <taxon>Pseudomonadota</taxon>
        <taxon>Gammaproteobacteria</taxon>
        <taxon>Legionellales</taxon>
        <taxon>Legionellaceae</taxon>
        <taxon>Legionella</taxon>
    </lineage>
</organism>
<sequence length="338" mass="38263">MYSLNWPRAYGIPNSTATFKLCPEDFQVNELFEGQFSGEGEHIVLKIEKKGLTTEQVIKSLARLINKPIKLISYAGLKDKQALTTQWLSIHAPGEVIEGIETLEAPGWKILECTRHNKKLRPGFLSGNHFTITLRNVSDESDLIHRIEQIKFKGVPNYFGEQRFGRDGGNLIKAEEILVQGRKVKDRFLKGMYFSAARSWLYNLILSRRVKESSWNLPLLGDVIQLVGSNSIFVNDKSLDEQLLQRIGEKDVSPASPLPGRSKNLVKGTALQIINEVYAEWSAWLDGLEKNGLEEAWRANILYAEQIEYRINQGTVELSFVLPAGAYATVVLRELVQY</sequence>
<accession>Q5WWQ2</accession>